<organism>
    <name type="scientific">Mus musculus</name>
    <name type="common">Mouse</name>
    <dbReference type="NCBI Taxonomy" id="10090"/>
    <lineage>
        <taxon>Eukaryota</taxon>
        <taxon>Metazoa</taxon>
        <taxon>Chordata</taxon>
        <taxon>Craniata</taxon>
        <taxon>Vertebrata</taxon>
        <taxon>Euteleostomi</taxon>
        <taxon>Mammalia</taxon>
        <taxon>Eutheria</taxon>
        <taxon>Euarchontoglires</taxon>
        <taxon>Glires</taxon>
        <taxon>Rodentia</taxon>
        <taxon>Myomorpha</taxon>
        <taxon>Muroidea</taxon>
        <taxon>Muridae</taxon>
        <taxon>Murinae</taxon>
        <taxon>Mus</taxon>
        <taxon>Mus</taxon>
    </lineage>
</organism>
<name>H2AZ_MOUSE</name>
<evidence type="ECO:0000250" key="1"/>
<evidence type="ECO:0000250" key="2">
    <source>
        <dbReference type="UniProtKB" id="P0C0S5"/>
    </source>
</evidence>
<evidence type="ECO:0000256" key="3">
    <source>
        <dbReference type="SAM" id="MobiDB-lite"/>
    </source>
</evidence>
<evidence type="ECO:0000269" key="4">
    <source>
    </source>
</evidence>
<evidence type="ECO:0000269" key="5">
    <source>
    </source>
</evidence>
<evidence type="ECO:0000269" key="6">
    <source>
    </source>
</evidence>
<evidence type="ECO:0000269" key="7">
    <source>
    </source>
</evidence>
<evidence type="ECO:0000269" key="8">
    <source>
    </source>
</evidence>
<evidence type="ECO:0000269" key="9">
    <source>
    </source>
</evidence>
<evidence type="ECO:0000269" key="10">
    <source>
    </source>
</evidence>
<evidence type="ECO:0000269" key="11">
    <source>
    </source>
</evidence>
<evidence type="ECO:0000269" key="12">
    <source>
    </source>
</evidence>
<evidence type="ECO:0000303" key="13">
    <source ref="1"/>
</evidence>
<evidence type="ECO:0000305" key="14"/>
<evidence type="ECO:0000305" key="15">
    <source>
    </source>
</evidence>
<evidence type="ECO:0000312" key="16">
    <source>
        <dbReference type="MGI" id="MGI:1888388"/>
    </source>
</evidence>
<evidence type="ECO:0007829" key="17">
    <source>
        <dbReference type="PDB" id="9B3P"/>
    </source>
</evidence>
<gene>
    <name evidence="16" type="primary">H2az1</name>
    <name evidence="16" type="synonym">H2afz</name>
    <name evidence="13" type="synonym">H2az</name>
</gene>
<feature type="initiator methionine" description="Removed" evidence="14">
    <location>
        <position position="1"/>
    </location>
</feature>
<feature type="chain" id="PRO_0000055298" description="Histone H2A.Z">
    <location>
        <begin position="2"/>
        <end position="128"/>
    </location>
</feature>
<feature type="region of interest" description="Disordered" evidence="3">
    <location>
        <begin position="1"/>
        <end position="25"/>
    </location>
</feature>
<feature type="region of interest" description="Required for interaction with INCENP" evidence="5">
    <location>
        <begin position="1"/>
        <end position="17"/>
    </location>
</feature>
<feature type="region of interest" description="M6 cassette" evidence="1">
    <location>
        <begin position="89"/>
        <end position="100"/>
    </location>
</feature>
<feature type="region of interest" description="Required for interaction with INCENP" evidence="5">
    <location>
        <begin position="93"/>
        <end position="103"/>
    </location>
</feature>
<feature type="region of interest" description="Required for interaction with PWWP2A" evidence="2">
    <location>
        <begin position="120"/>
        <end position="128"/>
    </location>
</feature>
<feature type="compositionally biased region" description="Basic and acidic residues" evidence="3">
    <location>
        <begin position="1"/>
        <end position="12"/>
    </location>
</feature>
<feature type="modified residue" description="N6-acetyllysine; alternate" evidence="15">
    <location>
        <position position="5"/>
    </location>
</feature>
<feature type="modified residue" description="N6-methyllysine; alternate" evidence="2">
    <location>
        <position position="5"/>
    </location>
</feature>
<feature type="modified residue" description="N6-acetyllysine; alternate" evidence="15">
    <location>
        <position position="8"/>
    </location>
</feature>
<feature type="modified residue" description="N6-methyllysine; alternate" evidence="2">
    <location>
        <position position="8"/>
    </location>
</feature>
<feature type="modified residue" description="N6-acetyllysine; alternate" evidence="15">
    <location>
        <position position="12"/>
    </location>
</feature>
<feature type="modified residue" description="N6-lactoyllysine; alternate" evidence="10">
    <location>
        <position position="12"/>
    </location>
</feature>
<feature type="modified residue" description="N6-acetyllysine; alternate" evidence="2">
    <location>
        <position position="14"/>
    </location>
</feature>
<feature type="modified residue" description="N6-lactoyllysine; alternate" evidence="2">
    <location>
        <position position="14"/>
    </location>
</feature>
<feature type="modified residue" description="N6-lactoyllysine" evidence="10">
    <location>
        <position position="116"/>
    </location>
</feature>
<feature type="cross-link" description="Glycyl lysine isopeptide (Lys-Gly) (interchain with G-Cter in ubiquitin)" evidence="2">
    <location>
        <position position="122"/>
    </location>
</feature>
<feature type="sequence conflict" description="In Ref. 3; BAE30460." evidence="14" ref="3">
    <original>K</original>
    <variation>E</variation>
    <location>
        <position position="12"/>
    </location>
</feature>
<feature type="sequence conflict" description="In Ref. 3; BAE26959." evidence="14" ref="3">
    <original>P</original>
    <variation>A</variation>
    <location>
        <position position="29"/>
    </location>
</feature>
<feature type="helix" evidence="17">
    <location>
        <begin position="20"/>
        <end position="24"/>
    </location>
</feature>
<feature type="helix" evidence="17">
    <location>
        <begin position="30"/>
        <end position="40"/>
    </location>
</feature>
<feature type="helix" evidence="17">
    <location>
        <begin position="49"/>
        <end position="74"/>
    </location>
</feature>
<feature type="turn" evidence="17">
    <location>
        <begin position="75"/>
        <end position="78"/>
    </location>
</feature>
<feature type="helix" evidence="17">
    <location>
        <begin position="84"/>
        <end position="92"/>
    </location>
</feature>
<feature type="strand" evidence="17">
    <location>
        <begin position="93"/>
        <end position="95"/>
    </location>
</feature>
<feature type="helix" evidence="17">
    <location>
        <begin position="96"/>
        <end position="100"/>
    </location>
</feature>
<feature type="helix" evidence="17">
    <location>
        <begin position="116"/>
        <end position="118"/>
    </location>
</feature>
<comment type="function">
    <text evidence="4 6 7">Variant histone H2A which replaces conventional H2A in a subset of nucleosomes. Nucleosomes wrap and compact DNA into chromatin, limiting DNA accessibility to the cellular machineries which require DNA as a template. Histones thereby play a central role in transcription regulation, DNA repair, DNA replication and chromosomal stability. DNA accessibility is regulated via a complex set of post-translational modifications of histones, also called histone code, and nucleosome remodeling. May be involved in the formation of constitutive heterochromatin. May be required for chromosome segregation during cell division. Essential for early development.</text>
</comment>
<comment type="subunit">
    <text evidence="2 5 9">Interacts (via M6 cassette) with ANP32E; leading to removal of H2A.Z/H2AZ1 from the nucleosome (By similarity). The nucleosome is a histone octamer containing two molecules each of H2A, H2B, H3 and H4 assembled in one H3-H4 heterotetramer and two H2A-H2B heterodimers. The octamer wraps approximately 147 bp of DNA. H2A or its variant H2AZ1 forms a heterodimer with H2B (By similarity). Interacts with INCENP (PubMed:12660166). Interacts with VPS72 (via N-terminal domain); the interaction is enhanced by VPS72 phosphorylation which is promoted by ZNHIT1 (PubMed:30842416). Interacts with PWWP2A (By similarity). Interacts with FH (when phosphorylated by PRKDC) (By similarity). Interacts with ZNHIT1; the interaction results in recruitment of H2AZ1 to the MYOG promoter region which is required for muscle-specific gene expression (By similarity).</text>
</comment>
<comment type="subcellular location">
    <subcellularLocation>
        <location evidence="5">Nucleus</location>
    </subcellularLocation>
    <subcellularLocation>
        <location evidence="5 6">Chromosome</location>
    </subcellularLocation>
    <text evidence="5 6">Enriched in constitutive heterochromatin (PubMed:12660166, PubMed:15195148). Absent from facultative heterochromatin of the inactive X chromosome (PubMed:12660166).</text>
</comment>
<comment type="PTM">
    <text evidence="2">Monoubiquitination of Lys-122 gives a specific tag for epigenetic transcriptional repression.</text>
</comment>
<comment type="PTM">
    <text evidence="2 8 11 12">Acetylated on Lys-5, Lys-8, Lys-12 and Lys-14 by KAT2A; KAT2A is recruited by the XPC complex in absence of DNA damage (By similarity). Acetylated on Lys-5, Lys-8 and Lys-12 during interphase; acetylation disappears at mitosis (PubMed:16204459, PubMed:7217105). Acetylation by the NuA4 histone acetyltransferase complex is required for hematopoietic stem cell maintenance (PubMed:32542325).</text>
</comment>
<comment type="PTM">
    <text evidence="12">Not phosphorylated.</text>
</comment>
<comment type="PTM">
    <text evidence="2">Monomethylated on Lys-5 and Lys-8 by SETD6. SETD6 predominantly methylates Lys-8, lys-5 being a possible secondary site.</text>
</comment>
<comment type="PTM">
    <text evidence="2">Lactylated in macrophages by EP300/P300 by using lactoyl-CoA directly derived from endogenous or exogenous lactate, leading to stimulates gene transcription.</text>
</comment>
<comment type="miscellaneous">
    <text>Down-regulation of H2az1 by RNA interference leads to death at early embryonic stages.</text>
</comment>
<comment type="similarity">
    <text evidence="14">Belongs to the histone H2A family.</text>
</comment>
<dbReference type="EMBL" id="U70494">
    <property type="protein sequence ID" value="AAB09578.1"/>
    <property type="molecule type" value="mRNA"/>
</dbReference>
<dbReference type="EMBL" id="AY074806">
    <property type="protein sequence ID" value="AAL71864.1"/>
    <property type="molecule type" value="mRNA"/>
</dbReference>
<dbReference type="EMBL" id="AK028176">
    <property type="protein sequence ID" value="BAC25791.1"/>
    <property type="molecule type" value="mRNA"/>
</dbReference>
<dbReference type="EMBL" id="AK088704">
    <property type="protein sequence ID" value="BAC40515.1"/>
    <property type="molecule type" value="mRNA"/>
</dbReference>
<dbReference type="EMBL" id="AK143572">
    <property type="protein sequence ID" value="BAE25443.1"/>
    <property type="molecule type" value="mRNA"/>
</dbReference>
<dbReference type="EMBL" id="AK146181">
    <property type="protein sequence ID" value="BAE26959.1"/>
    <property type="molecule type" value="mRNA"/>
</dbReference>
<dbReference type="EMBL" id="AK150454">
    <property type="protein sequence ID" value="BAE29574.1"/>
    <property type="molecule type" value="mRNA"/>
</dbReference>
<dbReference type="EMBL" id="AK151052">
    <property type="protein sequence ID" value="BAE30069.1"/>
    <property type="molecule type" value="mRNA"/>
</dbReference>
<dbReference type="EMBL" id="AK151509">
    <property type="protein sequence ID" value="BAE30460.1"/>
    <property type="molecule type" value="mRNA"/>
</dbReference>
<dbReference type="EMBL" id="AK151868">
    <property type="protein sequence ID" value="BAE30756.1"/>
    <property type="molecule type" value="mRNA"/>
</dbReference>
<dbReference type="EMBL" id="AK152398">
    <property type="protein sequence ID" value="BAE31186.1"/>
    <property type="molecule type" value="mRNA"/>
</dbReference>
<dbReference type="EMBL" id="AK152848">
    <property type="protein sequence ID" value="BAE31541.1"/>
    <property type="molecule type" value="mRNA"/>
</dbReference>
<dbReference type="EMBL" id="AK168178">
    <property type="protein sequence ID" value="BAE40138.1"/>
    <property type="molecule type" value="mRNA"/>
</dbReference>
<dbReference type="EMBL" id="BC079903">
    <property type="protein sequence ID" value="AAH79903.1"/>
    <property type="molecule type" value="mRNA"/>
</dbReference>
<dbReference type="EMBL" id="BC147478">
    <property type="protein sequence ID" value="AAI47479.1"/>
    <property type="molecule type" value="mRNA"/>
</dbReference>
<dbReference type="EMBL" id="BC158035">
    <property type="protein sequence ID" value="AAI58036.1"/>
    <property type="molecule type" value="mRNA"/>
</dbReference>
<dbReference type="EMBL" id="BC171999">
    <property type="protein sequence ID" value="AAI71999.1"/>
    <property type="molecule type" value="mRNA"/>
</dbReference>
<dbReference type="CCDS" id="CCDS38647.1"/>
<dbReference type="RefSeq" id="NP_058030.1">
    <property type="nucleotide sequence ID" value="NM_016750.3"/>
</dbReference>
<dbReference type="PDB" id="7M1X">
    <property type="method" value="EM"/>
    <property type="resolution" value="3.70 A"/>
    <property type="chains" value="C/G=1-128"/>
</dbReference>
<dbReference type="PDB" id="8UXQ">
    <property type="method" value="EM"/>
    <property type="resolution" value="6.30 A"/>
    <property type="chains" value="G/M=2-128"/>
</dbReference>
<dbReference type="PDB" id="9B3P">
    <property type="method" value="EM"/>
    <property type="resolution" value="3.00 A"/>
    <property type="chains" value="C/G=1-128"/>
</dbReference>
<dbReference type="PDBsum" id="7M1X"/>
<dbReference type="PDBsum" id="8UXQ"/>
<dbReference type="PDBsum" id="9B3P"/>
<dbReference type="EMDB" id="EMD-23626"/>
<dbReference type="EMDB" id="EMD-23630"/>
<dbReference type="EMDB" id="EMD-42773"/>
<dbReference type="EMDB" id="EMD-42774"/>
<dbReference type="EMDB" id="EMD-44148"/>
<dbReference type="SMR" id="P0C0S6"/>
<dbReference type="BioGRID" id="206173">
    <property type="interactions" value="9"/>
</dbReference>
<dbReference type="ComplexPortal" id="CPX-5715">
    <property type="entry name" value="Nucleosome, variant H3.1-H2A.Z-H2B.1"/>
</dbReference>
<dbReference type="FunCoup" id="P0C0S6">
    <property type="interactions" value="2757"/>
</dbReference>
<dbReference type="IntAct" id="P0C0S6">
    <property type="interactions" value="10"/>
</dbReference>
<dbReference type="MINT" id="P0C0S6"/>
<dbReference type="STRING" id="10090.ENSMUSP00000036907"/>
<dbReference type="GlyGen" id="P0C0S6">
    <property type="glycosylation" value="1 site, 1 O-linked glycan (1 site)"/>
</dbReference>
<dbReference type="iPTMnet" id="P0C0S6"/>
<dbReference type="PhosphoSitePlus" id="P0C0S6"/>
<dbReference type="jPOST" id="P0C0S6"/>
<dbReference type="PaxDb" id="10090-ENSMUSP00000036907"/>
<dbReference type="Pumba" id="P0C0S6"/>
<dbReference type="TopDownProteomics" id="P0C0S6"/>
<dbReference type="ABCD" id="P0C0S6">
    <property type="antibodies" value="1 sequenced antibody"/>
</dbReference>
<dbReference type="Antibodypedia" id="45022">
    <property type="antibodies" value="514 antibodies from 38 providers"/>
</dbReference>
<dbReference type="DNASU" id="51788"/>
<dbReference type="Ensembl" id="ENSMUST00000041045.14">
    <property type="protein sequence ID" value="ENSMUSP00000036907.8"/>
    <property type="gene ID" value="ENSMUSG00000037894.14"/>
</dbReference>
<dbReference type="GeneID" id="51788"/>
<dbReference type="KEGG" id="mmu:51788"/>
<dbReference type="UCSC" id="uc008rmo.2">
    <property type="organism name" value="mouse"/>
</dbReference>
<dbReference type="AGR" id="MGI:1888388"/>
<dbReference type="CTD" id="3015"/>
<dbReference type="MGI" id="MGI:1888388">
    <property type="gene designation" value="H2az1"/>
</dbReference>
<dbReference type="VEuPathDB" id="HostDB:ENSMUSG00000037894"/>
<dbReference type="eggNOG" id="KOG1757">
    <property type="taxonomic scope" value="Eukaryota"/>
</dbReference>
<dbReference type="GeneTree" id="ENSGT00900000140979"/>
<dbReference type="HOGENOM" id="CLU_062828_2_2_1"/>
<dbReference type="InParanoid" id="P0C0S6"/>
<dbReference type="OMA" id="PVGRIHT"/>
<dbReference type="OrthoDB" id="9421954at2759"/>
<dbReference type="PhylomeDB" id="P0C0S6"/>
<dbReference type="TreeFam" id="TF354232"/>
<dbReference type="BioGRID-ORCS" id="51788">
    <property type="hits" value="31 hits in 79 CRISPR screens"/>
</dbReference>
<dbReference type="ChiTaRS" id="H2afz">
    <property type="organism name" value="mouse"/>
</dbReference>
<dbReference type="PRO" id="PR:P0C0S6"/>
<dbReference type="Proteomes" id="UP000000589">
    <property type="component" value="Chromosome 3"/>
</dbReference>
<dbReference type="RNAct" id="P0C0S6">
    <property type="molecule type" value="protein"/>
</dbReference>
<dbReference type="Bgee" id="ENSMUSG00000037894">
    <property type="expression patterns" value="Expressed in ventricular zone and 70 other cell types or tissues"/>
</dbReference>
<dbReference type="ExpressionAtlas" id="P0C0S6">
    <property type="expression patterns" value="baseline and differential"/>
</dbReference>
<dbReference type="GO" id="GO:0000791">
    <property type="term" value="C:euchromatin"/>
    <property type="evidence" value="ECO:0007669"/>
    <property type="project" value="Ensembl"/>
</dbReference>
<dbReference type="GO" id="GO:0000792">
    <property type="term" value="C:heterochromatin"/>
    <property type="evidence" value="ECO:0007669"/>
    <property type="project" value="Ensembl"/>
</dbReference>
<dbReference type="GO" id="GO:0000786">
    <property type="term" value="C:nucleosome"/>
    <property type="evidence" value="ECO:0000266"/>
    <property type="project" value="ComplexPortal"/>
</dbReference>
<dbReference type="GO" id="GO:0005634">
    <property type="term" value="C:nucleus"/>
    <property type="evidence" value="ECO:0000314"/>
    <property type="project" value="MGI"/>
</dbReference>
<dbReference type="GO" id="GO:0031492">
    <property type="term" value="F:nucleosomal DNA binding"/>
    <property type="evidence" value="ECO:0007669"/>
    <property type="project" value="Ensembl"/>
</dbReference>
<dbReference type="GO" id="GO:0046982">
    <property type="term" value="F:protein heterodimerization activity"/>
    <property type="evidence" value="ECO:0007669"/>
    <property type="project" value="InterPro"/>
</dbReference>
<dbReference type="GO" id="GO:0000978">
    <property type="term" value="F:RNA polymerase II cis-regulatory region sequence-specific DNA binding"/>
    <property type="evidence" value="ECO:0007669"/>
    <property type="project" value="Ensembl"/>
</dbReference>
<dbReference type="GO" id="GO:0000979">
    <property type="term" value="F:RNA polymerase II core promoter sequence-specific DNA binding"/>
    <property type="evidence" value="ECO:0007669"/>
    <property type="project" value="Ensembl"/>
</dbReference>
<dbReference type="GO" id="GO:0030527">
    <property type="term" value="F:structural constituent of chromatin"/>
    <property type="evidence" value="ECO:0007669"/>
    <property type="project" value="InterPro"/>
</dbReference>
<dbReference type="GO" id="GO:0071392">
    <property type="term" value="P:cellular response to estradiol stimulus"/>
    <property type="evidence" value="ECO:0007669"/>
    <property type="project" value="Ensembl"/>
</dbReference>
<dbReference type="GO" id="GO:0006325">
    <property type="term" value="P:chromatin organization"/>
    <property type="evidence" value="ECO:0000303"/>
    <property type="project" value="ComplexPortal"/>
</dbReference>
<dbReference type="GO" id="GO:0045944">
    <property type="term" value="P:positive regulation of transcription by RNA polymerase II"/>
    <property type="evidence" value="ECO:0007669"/>
    <property type="project" value="Ensembl"/>
</dbReference>
<dbReference type="CDD" id="cd00074">
    <property type="entry name" value="HFD_H2A"/>
    <property type="match status" value="1"/>
</dbReference>
<dbReference type="FunFam" id="1.10.20.10:FF:000005">
    <property type="entry name" value="Histone H2A"/>
    <property type="match status" value="1"/>
</dbReference>
<dbReference type="Gene3D" id="1.10.20.10">
    <property type="entry name" value="Histone, subunit A"/>
    <property type="match status" value="1"/>
</dbReference>
<dbReference type="InterPro" id="IPR009072">
    <property type="entry name" value="Histone-fold"/>
</dbReference>
<dbReference type="InterPro" id="IPR002119">
    <property type="entry name" value="Histone_H2A"/>
</dbReference>
<dbReference type="InterPro" id="IPR007125">
    <property type="entry name" value="Histone_H2A/H2B/H3"/>
</dbReference>
<dbReference type="InterPro" id="IPR032454">
    <property type="entry name" value="Histone_H2A_C"/>
</dbReference>
<dbReference type="InterPro" id="IPR032458">
    <property type="entry name" value="Histone_H2A_CS"/>
</dbReference>
<dbReference type="PANTHER" id="PTHR23430">
    <property type="entry name" value="HISTONE H2A"/>
    <property type="match status" value="1"/>
</dbReference>
<dbReference type="Pfam" id="PF00125">
    <property type="entry name" value="Histone"/>
    <property type="match status" value="1"/>
</dbReference>
<dbReference type="Pfam" id="PF16211">
    <property type="entry name" value="Histone_H2A_C"/>
    <property type="match status" value="1"/>
</dbReference>
<dbReference type="PRINTS" id="PR00620">
    <property type="entry name" value="HISTONEH2A"/>
</dbReference>
<dbReference type="SMART" id="SM00414">
    <property type="entry name" value="H2A"/>
    <property type="match status" value="1"/>
</dbReference>
<dbReference type="SUPFAM" id="SSF47113">
    <property type="entry name" value="Histone-fold"/>
    <property type="match status" value="1"/>
</dbReference>
<dbReference type="PROSITE" id="PS00046">
    <property type="entry name" value="HISTONE_H2A"/>
    <property type="match status" value="1"/>
</dbReference>
<sequence length="128" mass="13553">MAGGKAGKDSGKAKTKAVSRSQRAGLQFPVGRIHRHLKSRTTSHGRVGATAAVYSAAILEYLTAEVLELAGNASKDLKVKRITPRHLQLAIRGDEELDSLIKATIAGGGVIPHIHKSLIGKKGQQKTV</sequence>
<accession>P0C0S6</accession>
<accession>B2RXZ3</accession>
<accession>P17317</accession>
<accession>Q3UA55</accession>
<accession>Q3UK43</accession>
<accession>Q68FD2</accession>
<proteinExistence type="evidence at protein level"/>
<keyword id="KW-0002">3D-structure</keyword>
<keyword id="KW-0007">Acetylation</keyword>
<keyword id="KW-0158">Chromosome</keyword>
<keyword id="KW-0217">Developmental protein</keyword>
<keyword id="KW-0238">DNA-binding</keyword>
<keyword id="KW-1017">Isopeptide bond</keyword>
<keyword id="KW-0488">Methylation</keyword>
<keyword id="KW-0544">Nucleosome core</keyword>
<keyword id="KW-0539">Nucleus</keyword>
<keyword id="KW-1185">Reference proteome</keyword>
<keyword id="KW-0832">Ubl conjugation</keyword>
<protein>
    <recommendedName>
        <fullName>Histone H2A.Z</fullName>
        <shortName>H2A/z</shortName>
    </recommendedName>
</protein>
<reference key="1">
    <citation type="submission" date="1996-10" db="EMBL/GenBank/DDBJ databases">
        <title>Molecular cloning of the murine histone H2A.Z cDNA and chromosomal localization of mouse H2A.Z related sequences.</title>
        <authorList>
            <person name="Rocha D."/>
            <person name="Carrier A."/>
            <person name="Anderson E."/>
            <person name="Botcherby M."/>
            <person name="Guenet J.-L."/>
            <person name="Jordan B."/>
        </authorList>
    </citation>
    <scope>NUCLEOTIDE SEQUENCE [MRNA]</scope>
    <source>
        <strain>C57BL/6J</strain>
    </source>
</reference>
<reference key="2">
    <citation type="submission" date="2002-01" db="EMBL/GenBank/DDBJ databases">
        <title>Histone H2A.Z expression and regulation in mouse mammary gland.</title>
        <authorList>
            <person name="Le Provost F."/>
            <person name="Charlier M."/>
        </authorList>
    </citation>
    <scope>NUCLEOTIDE SEQUENCE [MRNA]</scope>
    <source>
        <strain>C57BL/6 X CBA</strain>
    </source>
</reference>
<reference key="3">
    <citation type="journal article" date="2005" name="Science">
        <title>The transcriptional landscape of the mammalian genome.</title>
        <authorList>
            <person name="Carninci P."/>
            <person name="Kasukawa T."/>
            <person name="Katayama S."/>
            <person name="Gough J."/>
            <person name="Frith M.C."/>
            <person name="Maeda N."/>
            <person name="Oyama R."/>
            <person name="Ravasi T."/>
            <person name="Lenhard B."/>
            <person name="Wells C."/>
            <person name="Kodzius R."/>
            <person name="Shimokawa K."/>
            <person name="Bajic V.B."/>
            <person name="Brenner S.E."/>
            <person name="Batalov S."/>
            <person name="Forrest A.R."/>
            <person name="Zavolan M."/>
            <person name="Davis M.J."/>
            <person name="Wilming L.G."/>
            <person name="Aidinis V."/>
            <person name="Allen J.E."/>
            <person name="Ambesi-Impiombato A."/>
            <person name="Apweiler R."/>
            <person name="Aturaliya R.N."/>
            <person name="Bailey T.L."/>
            <person name="Bansal M."/>
            <person name="Baxter L."/>
            <person name="Beisel K.W."/>
            <person name="Bersano T."/>
            <person name="Bono H."/>
            <person name="Chalk A.M."/>
            <person name="Chiu K.P."/>
            <person name="Choudhary V."/>
            <person name="Christoffels A."/>
            <person name="Clutterbuck D.R."/>
            <person name="Crowe M.L."/>
            <person name="Dalla E."/>
            <person name="Dalrymple B.P."/>
            <person name="de Bono B."/>
            <person name="Della Gatta G."/>
            <person name="di Bernardo D."/>
            <person name="Down T."/>
            <person name="Engstrom P."/>
            <person name="Fagiolini M."/>
            <person name="Faulkner G."/>
            <person name="Fletcher C.F."/>
            <person name="Fukushima T."/>
            <person name="Furuno M."/>
            <person name="Futaki S."/>
            <person name="Gariboldi M."/>
            <person name="Georgii-Hemming P."/>
            <person name="Gingeras T.R."/>
            <person name="Gojobori T."/>
            <person name="Green R.E."/>
            <person name="Gustincich S."/>
            <person name="Harbers M."/>
            <person name="Hayashi Y."/>
            <person name="Hensch T.K."/>
            <person name="Hirokawa N."/>
            <person name="Hill D."/>
            <person name="Huminiecki L."/>
            <person name="Iacono M."/>
            <person name="Ikeo K."/>
            <person name="Iwama A."/>
            <person name="Ishikawa T."/>
            <person name="Jakt M."/>
            <person name="Kanapin A."/>
            <person name="Katoh M."/>
            <person name="Kawasawa Y."/>
            <person name="Kelso J."/>
            <person name="Kitamura H."/>
            <person name="Kitano H."/>
            <person name="Kollias G."/>
            <person name="Krishnan S.P."/>
            <person name="Kruger A."/>
            <person name="Kummerfeld S.K."/>
            <person name="Kurochkin I.V."/>
            <person name="Lareau L.F."/>
            <person name="Lazarevic D."/>
            <person name="Lipovich L."/>
            <person name="Liu J."/>
            <person name="Liuni S."/>
            <person name="McWilliam S."/>
            <person name="Madan Babu M."/>
            <person name="Madera M."/>
            <person name="Marchionni L."/>
            <person name="Matsuda H."/>
            <person name="Matsuzawa S."/>
            <person name="Miki H."/>
            <person name="Mignone F."/>
            <person name="Miyake S."/>
            <person name="Morris K."/>
            <person name="Mottagui-Tabar S."/>
            <person name="Mulder N."/>
            <person name="Nakano N."/>
            <person name="Nakauchi H."/>
            <person name="Ng P."/>
            <person name="Nilsson R."/>
            <person name="Nishiguchi S."/>
            <person name="Nishikawa S."/>
            <person name="Nori F."/>
            <person name="Ohara O."/>
            <person name="Okazaki Y."/>
            <person name="Orlando V."/>
            <person name="Pang K.C."/>
            <person name="Pavan W.J."/>
            <person name="Pavesi G."/>
            <person name="Pesole G."/>
            <person name="Petrovsky N."/>
            <person name="Piazza S."/>
            <person name="Reed J."/>
            <person name="Reid J.F."/>
            <person name="Ring B.Z."/>
            <person name="Ringwald M."/>
            <person name="Rost B."/>
            <person name="Ruan Y."/>
            <person name="Salzberg S.L."/>
            <person name="Sandelin A."/>
            <person name="Schneider C."/>
            <person name="Schoenbach C."/>
            <person name="Sekiguchi K."/>
            <person name="Semple C.A."/>
            <person name="Seno S."/>
            <person name="Sessa L."/>
            <person name="Sheng Y."/>
            <person name="Shibata Y."/>
            <person name="Shimada H."/>
            <person name="Shimada K."/>
            <person name="Silva D."/>
            <person name="Sinclair B."/>
            <person name="Sperling S."/>
            <person name="Stupka E."/>
            <person name="Sugiura K."/>
            <person name="Sultana R."/>
            <person name="Takenaka Y."/>
            <person name="Taki K."/>
            <person name="Tammoja K."/>
            <person name="Tan S.L."/>
            <person name="Tang S."/>
            <person name="Taylor M.S."/>
            <person name="Tegner J."/>
            <person name="Teichmann S.A."/>
            <person name="Ueda H.R."/>
            <person name="van Nimwegen E."/>
            <person name="Verardo R."/>
            <person name="Wei C.L."/>
            <person name="Yagi K."/>
            <person name="Yamanishi H."/>
            <person name="Zabarovsky E."/>
            <person name="Zhu S."/>
            <person name="Zimmer A."/>
            <person name="Hide W."/>
            <person name="Bult C."/>
            <person name="Grimmond S.M."/>
            <person name="Teasdale R.D."/>
            <person name="Liu E.T."/>
            <person name="Brusic V."/>
            <person name="Quackenbush J."/>
            <person name="Wahlestedt C."/>
            <person name="Mattick J.S."/>
            <person name="Hume D.A."/>
            <person name="Kai C."/>
            <person name="Sasaki D."/>
            <person name="Tomaru Y."/>
            <person name="Fukuda S."/>
            <person name="Kanamori-Katayama M."/>
            <person name="Suzuki M."/>
            <person name="Aoki J."/>
            <person name="Arakawa T."/>
            <person name="Iida J."/>
            <person name="Imamura K."/>
            <person name="Itoh M."/>
            <person name="Kato T."/>
            <person name="Kawaji H."/>
            <person name="Kawagashira N."/>
            <person name="Kawashima T."/>
            <person name="Kojima M."/>
            <person name="Kondo S."/>
            <person name="Konno H."/>
            <person name="Nakano K."/>
            <person name="Ninomiya N."/>
            <person name="Nishio T."/>
            <person name="Okada M."/>
            <person name="Plessy C."/>
            <person name="Shibata K."/>
            <person name="Shiraki T."/>
            <person name="Suzuki S."/>
            <person name="Tagami M."/>
            <person name="Waki K."/>
            <person name="Watahiki A."/>
            <person name="Okamura-Oho Y."/>
            <person name="Suzuki H."/>
            <person name="Kawai J."/>
            <person name="Hayashizaki Y."/>
        </authorList>
    </citation>
    <scope>NUCLEOTIDE SEQUENCE [LARGE SCALE MRNA]</scope>
    <source>
        <strain>BALB/cJ</strain>
        <strain>C57BL/6J</strain>
        <strain>DBA/2J</strain>
        <strain>NOD</strain>
        <tissue>Bone marrow</tissue>
        <tissue>Spleen</tissue>
        <tissue>Thymus</tissue>
    </source>
</reference>
<reference key="4">
    <citation type="journal article" date="2004" name="Genome Res.">
        <title>The status, quality, and expansion of the NIH full-length cDNA project: the Mammalian Gene Collection (MGC).</title>
        <authorList>
            <consortium name="The MGC Project Team"/>
        </authorList>
    </citation>
    <scope>NUCLEOTIDE SEQUENCE [LARGE SCALE MRNA]</scope>
    <source>
        <strain>C57BL/6J</strain>
        <tissue>Brain</tissue>
    </source>
</reference>
<reference key="5">
    <citation type="journal article" date="1981" name="J. Biol. Chem.">
        <title>Quantitative determination of histone modification. H2A acetylation and phosphorylation.</title>
        <authorList>
            <person name="Pantazis P."/>
            <person name="Bonner W.M."/>
        </authorList>
    </citation>
    <scope>ACETYLATION</scope>
    <scope>LACK OF PHOSPHORYLATION</scope>
</reference>
<reference key="6">
    <citation type="journal article" date="2001" name="Curr. Biol.">
        <title>Histone variant H2A.Z is required for early mammalian development.</title>
        <authorList>
            <person name="Faast R."/>
            <person name="Thonglairoam V."/>
            <person name="Schulz T.C."/>
            <person name="Beall J."/>
            <person name="Wells J.R.E."/>
            <person name="Taylor H."/>
            <person name="Matthaei K."/>
            <person name="Rathjen P.D."/>
            <person name="Tremethick D.J."/>
            <person name="Lyons I."/>
        </authorList>
    </citation>
    <scope>FUNCTION</scope>
</reference>
<reference key="7">
    <citation type="journal article" date="2003" name="EMBO J.">
        <title>Pericentric heterochromatin becomes enriched with H2A.Z during early mammalian development.</title>
        <authorList>
            <person name="Rangasamy D."/>
            <person name="Berven L."/>
            <person name="Ridgway P."/>
            <person name="Tremethick D.J."/>
        </authorList>
    </citation>
    <scope>SUBCELLULAR LOCATION</scope>
    <scope>INTERACTION WITH INCENP</scope>
</reference>
<reference key="8">
    <citation type="journal article" date="2004" name="Mol. Cell">
        <title>H2A.Z alters the nucleosome surface to promote HP1alpha-mediated chromatin fiber folding.</title>
        <authorList>
            <person name="Fan J.Y."/>
            <person name="Rangasamy D."/>
            <person name="Luger K."/>
            <person name="Tremethick D.J."/>
        </authorList>
    </citation>
    <scope>FUNCTION</scope>
</reference>
<reference key="9">
    <citation type="journal article" date="2004" name="Nat. Struct. Mol. Biol.">
        <title>RNA interference demonstrates a novel role for H2A.Z in chromosome segregation.</title>
        <authorList>
            <person name="Rangasamy D."/>
            <person name="Greaves I."/>
            <person name="Tremethick D.J."/>
        </authorList>
    </citation>
    <scope>SUBCELLULAR LOCATION</scope>
    <scope>FUNCTION</scope>
</reference>
<reference key="10">
    <citation type="journal article" date="2005" name="Nucleic Acids Res.">
        <title>The replacement histone H2A.Z in a hyperacetylated form is a feature of active genes in the chicken.</title>
        <authorList>
            <person name="Bruce K."/>
            <person name="Myers F.A."/>
            <person name="Mantouvalou E."/>
            <person name="Lefevre P."/>
            <person name="Greaves I."/>
            <person name="Bonifer C."/>
            <person name="Tremethick D.J."/>
            <person name="Thorne A.W."/>
            <person name="Crane-Robinson C."/>
        </authorList>
    </citation>
    <scope>ACETYLATION AT LYS-5; LYS-8 AND LYS-12</scope>
</reference>
<reference key="11">
    <citation type="journal article" date="2019" name="Nature">
        <title>Metabolic regulation of gene expression by histone lactylation.</title>
        <authorList>
            <person name="Zhang D."/>
            <person name="Tang Z."/>
            <person name="Huang H."/>
            <person name="Zhou G."/>
            <person name="Cui C."/>
            <person name="Weng Y."/>
            <person name="Liu W."/>
            <person name="Kim S."/>
            <person name="Lee S."/>
            <person name="Perez-Neut M."/>
            <person name="Ding J."/>
            <person name="Czyz D."/>
            <person name="Hu R."/>
            <person name="Ye Z."/>
            <person name="He M."/>
            <person name="Zheng Y.G."/>
            <person name="Shuman H.A."/>
            <person name="Dai L."/>
            <person name="Ren B."/>
            <person name="Roeder R.G."/>
            <person name="Becker L."/>
            <person name="Zhao Y."/>
        </authorList>
    </citation>
    <scope>LACTYLATION AT LYS-12 AND LYS-116</scope>
</reference>
<reference key="12">
    <citation type="journal article" date="2019" name="Nat. Commun.">
        <title>Znhit1 controls intestinal stem cell maintenance by regulating H2A.Z incorporation.</title>
        <authorList>
            <person name="Zhao B."/>
            <person name="Chen Y."/>
            <person name="Jiang N."/>
            <person name="Yang L."/>
            <person name="Sun S."/>
            <person name="Zhang Y."/>
            <person name="Wen Z."/>
            <person name="Ray L."/>
            <person name="Liu H."/>
            <person name="Hou G."/>
            <person name="Lin X."/>
        </authorList>
    </citation>
    <scope>INTERACTION WITH VPS72</scope>
</reference>
<reference key="13">
    <citation type="journal article" date="2020" name="Blood">
        <title>Lysine acetyltransferase Tip60 is required for hematopoietic stem cell maintenance.</title>
        <authorList>
            <person name="Numata A."/>
            <person name="Kwok H.S."/>
            <person name="Zhou Q.L."/>
            <person name="Li J."/>
            <person name="Tirado-Magallanes R."/>
            <person name="Angarica V.E."/>
            <person name="Hannah R."/>
            <person name="Park J."/>
            <person name="Wang C.Q."/>
            <person name="Krishnan V."/>
            <person name="Rajagopalan D."/>
            <person name="Zhang Y."/>
            <person name="Zhou S."/>
            <person name="Welner R.S."/>
            <person name="Osato M."/>
            <person name="Jha S."/>
            <person name="Bohlander S.K."/>
            <person name="Goettgens B."/>
            <person name="Yang H."/>
            <person name="Benoukraf T."/>
            <person name="Lough J.W."/>
            <person name="Bararia D."/>
            <person name="Tenen D.G."/>
        </authorList>
    </citation>
    <scope>ACETYLATION</scope>
</reference>